<gene>
    <name evidence="1" type="primary">rpmF</name>
    <name type="ordered locus">lhv_1046</name>
</gene>
<name>RL32_LACH4</name>
<proteinExistence type="inferred from homology"/>
<organism>
    <name type="scientific">Lactobacillus helveticus (strain DPC 4571)</name>
    <dbReference type="NCBI Taxonomy" id="405566"/>
    <lineage>
        <taxon>Bacteria</taxon>
        <taxon>Bacillati</taxon>
        <taxon>Bacillota</taxon>
        <taxon>Bacilli</taxon>
        <taxon>Lactobacillales</taxon>
        <taxon>Lactobacillaceae</taxon>
        <taxon>Lactobacillus</taxon>
    </lineage>
</organism>
<evidence type="ECO:0000255" key="1">
    <source>
        <dbReference type="HAMAP-Rule" id="MF_00340"/>
    </source>
</evidence>
<evidence type="ECO:0000256" key="2">
    <source>
        <dbReference type="SAM" id="MobiDB-lite"/>
    </source>
</evidence>
<evidence type="ECO:0000305" key="3"/>
<protein>
    <recommendedName>
        <fullName evidence="1">Large ribosomal subunit protein bL32</fullName>
    </recommendedName>
    <alternativeName>
        <fullName evidence="3">50S ribosomal protein L32</fullName>
    </alternativeName>
</protein>
<comment type="similarity">
    <text evidence="1">Belongs to the bacterial ribosomal protein bL32 family.</text>
</comment>
<reference key="1">
    <citation type="journal article" date="2008" name="J. Bacteriol.">
        <title>Genome sequence of Lactobacillus helveticus: an organism distinguished by selective gene loss and IS element expansion.</title>
        <authorList>
            <person name="Callanan M."/>
            <person name="Kaleta P."/>
            <person name="O'Callaghan J."/>
            <person name="O'Sullivan O."/>
            <person name="Jordan K."/>
            <person name="McAuliffe O."/>
            <person name="Sangrador-Vegas A."/>
            <person name="Slattery L."/>
            <person name="Fitzgerald G.F."/>
            <person name="Beresford T."/>
            <person name="Ross R.P."/>
        </authorList>
    </citation>
    <scope>NUCLEOTIDE SEQUENCE [LARGE SCALE GENOMIC DNA]</scope>
    <source>
        <strain>DPC 4571</strain>
    </source>
</reference>
<feature type="chain" id="PRO_1000072063" description="Large ribosomal subunit protein bL32">
    <location>
        <begin position="1"/>
        <end position="62"/>
    </location>
</feature>
<feature type="region of interest" description="Disordered" evidence="2">
    <location>
        <begin position="1"/>
        <end position="20"/>
    </location>
</feature>
<feature type="compositionally biased region" description="Basic residues" evidence="2">
    <location>
        <begin position="7"/>
        <end position="20"/>
    </location>
</feature>
<keyword id="KW-0687">Ribonucleoprotein</keyword>
<keyword id="KW-0689">Ribosomal protein</keyword>
<sequence length="62" mass="7079">MAVPARHTSKQKKRSRRGHIKLSVPAMHYDATTGEYRLSHRVSPKGYYKGRQVVNNNDNGNN</sequence>
<dbReference type="EMBL" id="CP000517">
    <property type="protein sequence ID" value="ABX27107.1"/>
    <property type="molecule type" value="Genomic_DNA"/>
</dbReference>
<dbReference type="RefSeq" id="WP_003547064.1">
    <property type="nucleotide sequence ID" value="NC_010080.1"/>
</dbReference>
<dbReference type="SMR" id="A8YV19"/>
<dbReference type="GeneID" id="93289933"/>
<dbReference type="KEGG" id="lhe:lhv_1046"/>
<dbReference type="eggNOG" id="COG0333">
    <property type="taxonomic scope" value="Bacteria"/>
</dbReference>
<dbReference type="HOGENOM" id="CLU_129084_2_1_9"/>
<dbReference type="Proteomes" id="UP000000790">
    <property type="component" value="Chromosome"/>
</dbReference>
<dbReference type="GO" id="GO:0015934">
    <property type="term" value="C:large ribosomal subunit"/>
    <property type="evidence" value="ECO:0007669"/>
    <property type="project" value="InterPro"/>
</dbReference>
<dbReference type="GO" id="GO:0003735">
    <property type="term" value="F:structural constituent of ribosome"/>
    <property type="evidence" value="ECO:0007669"/>
    <property type="project" value="InterPro"/>
</dbReference>
<dbReference type="GO" id="GO:0006412">
    <property type="term" value="P:translation"/>
    <property type="evidence" value="ECO:0007669"/>
    <property type="project" value="UniProtKB-UniRule"/>
</dbReference>
<dbReference type="HAMAP" id="MF_00340">
    <property type="entry name" value="Ribosomal_bL32"/>
    <property type="match status" value="1"/>
</dbReference>
<dbReference type="InterPro" id="IPR002677">
    <property type="entry name" value="Ribosomal_bL32"/>
</dbReference>
<dbReference type="InterPro" id="IPR044957">
    <property type="entry name" value="Ribosomal_bL32_bact"/>
</dbReference>
<dbReference type="InterPro" id="IPR011332">
    <property type="entry name" value="Ribosomal_zn-bd"/>
</dbReference>
<dbReference type="NCBIfam" id="TIGR01031">
    <property type="entry name" value="rpmF_bact"/>
    <property type="match status" value="1"/>
</dbReference>
<dbReference type="PANTHER" id="PTHR35534">
    <property type="entry name" value="50S RIBOSOMAL PROTEIN L32"/>
    <property type="match status" value="1"/>
</dbReference>
<dbReference type="PANTHER" id="PTHR35534:SF1">
    <property type="entry name" value="LARGE RIBOSOMAL SUBUNIT PROTEIN BL32"/>
    <property type="match status" value="1"/>
</dbReference>
<dbReference type="Pfam" id="PF01783">
    <property type="entry name" value="Ribosomal_L32p"/>
    <property type="match status" value="1"/>
</dbReference>
<dbReference type="SUPFAM" id="SSF57829">
    <property type="entry name" value="Zn-binding ribosomal proteins"/>
    <property type="match status" value="1"/>
</dbReference>
<accession>A8YV19</accession>